<protein>
    <recommendedName>
        <fullName evidence="1">UvrABC system protein C</fullName>
        <shortName evidence="1">Protein UvrC</shortName>
    </recommendedName>
    <alternativeName>
        <fullName evidence="1">Excinuclease ABC subunit C</fullName>
    </alternativeName>
</protein>
<gene>
    <name evidence="1" type="primary">uvrC</name>
    <name type="ordered locus">TM_0265</name>
</gene>
<comment type="function">
    <text evidence="1">The UvrABC repair system catalyzes the recognition and processing of DNA lesions. UvrC both incises the 5' and 3' sides of the lesion. The N-terminal half is responsible for the 3' incision and the C-terminal half is responsible for the 5' incision.</text>
</comment>
<comment type="subunit">
    <text evidence="1">Interacts with UvrB in an incision complex.</text>
</comment>
<comment type="subcellular location">
    <subcellularLocation>
        <location evidence="1">Cytoplasm</location>
    </subcellularLocation>
</comment>
<comment type="similarity">
    <text evidence="1">Belongs to the UvrC family.</text>
</comment>
<accession>Q9WYA3</accession>
<keyword id="KW-0002">3D-structure</keyword>
<keyword id="KW-0963">Cytoplasm</keyword>
<keyword id="KW-0227">DNA damage</keyword>
<keyword id="KW-0228">DNA excision</keyword>
<keyword id="KW-0234">DNA repair</keyword>
<keyword id="KW-0267">Excision nuclease</keyword>
<keyword id="KW-1185">Reference proteome</keyword>
<keyword id="KW-0742">SOS response</keyword>
<sequence>MKEKIRKKILLAPEEPGVYIFKNKGVPIYIGKAKRLSNRLRSYLNPQTEKVFRIGEEADELETIVVMNEREAFILEANLIKKYRPKYNVRLKDTDFYPYIRISDDEIPYVEIVKRKLWDGTYFGPYTSVQFVRNLLEILQKIMGFRTCKSDLKRIKRPCFLYHLGRCIGPCIGNIESHEEAIRKLREFLSGNMEEVFDYLKEKMETHSKMLDFENAAKYRDLLLNLSNVLESQGVVFEENINCDVLVHAHDLFVVLRVRNGYLVGKISFEMEGGNVEDFIREYYISGRGDIPKTLILESDLDEMDYSSLGFEYVGPPRSTTEEDLLEKAKKNLENELKMRGLRKEALEELMKLLNMKDFPYRIEGIDISHLQGKYTVASLVVFEDGFPKKGDYRRYKIEQDHPDDYESIRTVVKRRYSKHPLPNLLFVDGGIGQVNAAIEALKEIGKDCPVVGLAKKEETVVFENREIHLPHDHPVLRLLVQIRDETHRFAVSYHRKRREKESLRSVLDNVPGIGPIRKKKLIEHFGSLENIRSASLEEIARVIGSTEIARRVLDIL</sequence>
<dbReference type="EMBL" id="AE000512">
    <property type="protein sequence ID" value="AAD35353.1"/>
    <property type="molecule type" value="Genomic_DNA"/>
</dbReference>
<dbReference type="PIR" id="H72400">
    <property type="entry name" value="H72400"/>
</dbReference>
<dbReference type="RefSeq" id="NP_228078.1">
    <property type="nucleotide sequence ID" value="NC_000853.1"/>
</dbReference>
<dbReference type="RefSeq" id="WP_004082969.1">
    <property type="nucleotide sequence ID" value="NZ_CP011107.1"/>
</dbReference>
<dbReference type="PDB" id="1YCZ">
    <property type="method" value="X-ray"/>
    <property type="resolution" value="1.80 A"/>
    <property type="chains" value="A=1-96"/>
</dbReference>
<dbReference type="PDB" id="1YD0">
    <property type="method" value="X-ray"/>
    <property type="resolution" value="1.50 A"/>
    <property type="chains" value="A=1-96"/>
</dbReference>
<dbReference type="PDB" id="1YD1">
    <property type="method" value="X-ray"/>
    <property type="resolution" value="1.80 A"/>
    <property type="chains" value="A=1-96"/>
</dbReference>
<dbReference type="PDB" id="1YD2">
    <property type="method" value="X-ray"/>
    <property type="resolution" value="1.60 A"/>
    <property type="chains" value="A=1-96"/>
</dbReference>
<dbReference type="PDB" id="1YD3">
    <property type="method" value="X-ray"/>
    <property type="resolution" value="1.60 A"/>
    <property type="chains" value="A=1-96"/>
</dbReference>
<dbReference type="PDB" id="1YD4">
    <property type="method" value="X-ray"/>
    <property type="resolution" value="1.90 A"/>
    <property type="chains" value="A=1-96"/>
</dbReference>
<dbReference type="PDB" id="1YD5">
    <property type="method" value="X-ray"/>
    <property type="resolution" value="1.80 A"/>
    <property type="chains" value="A=1-96"/>
</dbReference>
<dbReference type="PDB" id="2NRR">
    <property type="method" value="X-ray"/>
    <property type="resolution" value="1.20 A"/>
    <property type="chains" value="A=345-502"/>
</dbReference>
<dbReference type="PDB" id="2NRT">
    <property type="method" value="X-ray"/>
    <property type="resolution" value="1.50 A"/>
    <property type="chains" value="A=339-557"/>
</dbReference>
<dbReference type="PDB" id="2NRV">
    <property type="method" value="X-ray"/>
    <property type="resolution" value="1.80 A"/>
    <property type="chains" value="A/B=339-557"/>
</dbReference>
<dbReference type="PDB" id="2NRW">
    <property type="method" value="X-ray"/>
    <property type="resolution" value="2.30 A"/>
    <property type="chains" value="A=339-557"/>
</dbReference>
<dbReference type="PDB" id="2NRX">
    <property type="method" value="X-ray"/>
    <property type="resolution" value="1.90 A"/>
    <property type="chains" value="A/B=339-557"/>
</dbReference>
<dbReference type="PDB" id="2NRZ">
    <property type="method" value="X-ray"/>
    <property type="resolution" value="2.00 A"/>
    <property type="chains" value="A/B=339-557"/>
</dbReference>
<dbReference type="PDBsum" id="1YCZ"/>
<dbReference type="PDBsum" id="1YD0"/>
<dbReference type="PDBsum" id="1YD1"/>
<dbReference type="PDBsum" id="1YD2"/>
<dbReference type="PDBsum" id="1YD3"/>
<dbReference type="PDBsum" id="1YD4"/>
<dbReference type="PDBsum" id="1YD5"/>
<dbReference type="PDBsum" id="2NRR"/>
<dbReference type="PDBsum" id="2NRT"/>
<dbReference type="PDBsum" id="2NRV"/>
<dbReference type="PDBsum" id="2NRW"/>
<dbReference type="PDBsum" id="2NRX"/>
<dbReference type="PDBsum" id="2NRZ"/>
<dbReference type="SMR" id="Q9WYA3"/>
<dbReference type="FunCoup" id="Q9WYA3">
    <property type="interactions" value="281"/>
</dbReference>
<dbReference type="STRING" id="243274.TM_0265"/>
<dbReference type="PaxDb" id="243274-THEMA_03400"/>
<dbReference type="EnsemblBacteria" id="AAD35353">
    <property type="protein sequence ID" value="AAD35353"/>
    <property type="gene ID" value="TM_0265"/>
</dbReference>
<dbReference type="KEGG" id="tma:TM0265"/>
<dbReference type="KEGG" id="tmi:THEMA_03400"/>
<dbReference type="KEGG" id="tmm:Tmari_0263"/>
<dbReference type="KEGG" id="tmw:THMA_0272"/>
<dbReference type="eggNOG" id="COG0322">
    <property type="taxonomic scope" value="Bacteria"/>
</dbReference>
<dbReference type="InParanoid" id="Q9WYA3"/>
<dbReference type="OrthoDB" id="9804933at2"/>
<dbReference type="EvolutionaryTrace" id="Q9WYA3"/>
<dbReference type="Proteomes" id="UP000008183">
    <property type="component" value="Chromosome"/>
</dbReference>
<dbReference type="GO" id="GO:0005737">
    <property type="term" value="C:cytoplasm"/>
    <property type="evidence" value="ECO:0007669"/>
    <property type="project" value="UniProtKB-SubCell"/>
</dbReference>
<dbReference type="GO" id="GO:0009380">
    <property type="term" value="C:excinuclease repair complex"/>
    <property type="evidence" value="ECO:0000318"/>
    <property type="project" value="GO_Central"/>
</dbReference>
<dbReference type="GO" id="GO:0003677">
    <property type="term" value="F:DNA binding"/>
    <property type="evidence" value="ECO:0007669"/>
    <property type="project" value="UniProtKB-UniRule"/>
</dbReference>
<dbReference type="GO" id="GO:0009381">
    <property type="term" value="F:excinuclease ABC activity"/>
    <property type="evidence" value="ECO:0007669"/>
    <property type="project" value="UniProtKB-UniRule"/>
</dbReference>
<dbReference type="GO" id="GO:0006974">
    <property type="term" value="P:DNA damage response"/>
    <property type="evidence" value="ECO:0000318"/>
    <property type="project" value="GO_Central"/>
</dbReference>
<dbReference type="GO" id="GO:0006289">
    <property type="term" value="P:nucleotide-excision repair"/>
    <property type="evidence" value="ECO:0007669"/>
    <property type="project" value="UniProtKB-UniRule"/>
</dbReference>
<dbReference type="GO" id="GO:0009432">
    <property type="term" value="P:SOS response"/>
    <property type="evidence" value="ECO:0007669"/>
    <property type="project" value="UniProtKB-UniRule"/>
</dbReference>
<dbReference type="CDD" id="cd10434">
    <property type="entry name" value="GIY-YIG_UvrC_Cho"/>
    <property type="match status" value="1"/>
</dbReference>
<dbReference type="FunFam" id="3.30.420.340:FF:000004">
    <property type="entry name" value="UvrABC system protein C"/>
    <property type="match status" value="1"/>
</dbReference>
<dbReference type="FunFam" id="3.40.1440.10:FF:000001">
    <property type="entry name" value="UvrABC system protein C"/>
    <property type="match status" value="1"/>
</dbReference>
<dbReference type="Gene3D" id="1.10.150.20">
    <property type="entry name" value="5' to 3' exonuclease, C-terminal subdomain"/>
    <property type="match status" value="1"/>
</dbReference>
<dbReference type="Gene3D" id="3.40.1440.10">
    <property type="entry name" value="GIY-YIG endonuclease"/>
    <property type="match status" value="1"/>
</dbReference>
<dbReference type="Gene3D" id="4.10.860.10">
    <property type="entry name" value="UVR domain"/>
    <property type="match status" value="1"/>
</dbReference>
<dbReference type="Gene3D" id="3.30.420.340">
    <property type="entry name" value="UvrC, RNAse H endonuclease domain"/>
    <property type="match status" value="1"/>
</dbReference>
<dbReference type="HAMAP" id="MF_00203">
    <property type="entry name" value="UvrC"/>
    <property type="match status" value="1"/>
</dbReference>
<dbReference type="InterPro" id="IPR000305">
    <property type="entry name" value="GIY-YIG_endonuc"/>
</dbReference>
<dbReference type="InterPro" id="IPR035901">
    <property type="entry name" value="GIY-YIG_endonuc_sf"/>
</dbReference>
<dbReference type="InterPro" id="IPR047296">
    <property type="entry name" value="GIY-YIG_UvrC_Cho"/>
</dbReference>
<dbReference type="InterPro" id="IPR010994">
    <property type="entry name" value="RuvA_2-like"/>
</dbReference>
<dbReference type="InterPro" id="IPR001943">
    <property type="entry name" value="UVR_dom"/>
</dbReference>
<dbReference type="InterPro" id="IPR036876">
    <property type="entry name" value="UVR_dom_sf"/>
</dbReference>
<dbReference type="InterPro" id="IPR050066">
    <property type="entry name" value="UvrABC_protein_C"/>
</dbReference>
<dbReference type="InterPro" id="IPR004791">
    <property type="entry name" value="UvrC"/>
</dbReference>
<dbReference type="InterPro" id="IPR001162">
    <property type="entry name" value="UvrC_RNase_H_dom"/>
</dbReference>
<dbReference type="InterPro" id="IPR038476">
    <property type="entry name" value="UvrC_RNase_H_dom_sf"/>
</dbReference>
<dbReference type="NCBIfam" id="TIGR00194">
    <property type="entry name" value="uvrC"/>
    <property type="match status" value="1"/>
</dbReference>
<dbReference type="PANTHER" id="PTHR30562:SF1">
    <property type="entry name" value="UVRABC SYSTEM PROTEIN C"/>
    <property type="match status" value="1"/>
</dbReference>
<dbReference type="PANTHER" id="PTHR30562">
    <property type="entry name" value="UVRC/OXIDOREDUCTASE"/>
    <property type="match status" value="1"/>
</dbReference>
<dbReference type="Pfam" id="PF01541">
    <property type="entry name" value="GIY-YIG"/>
    <property type="match status" value="1"/>
</dbReference>
<dbReference type="Pfam" id="PF14520">
    <property type="entry name" value="HHH_5"/>
    <property type="match status" value="1"/>
</dbReference>
<dbReference type="Pfam" id="PF02151">
    <property type="entry name" value="UVR"/>
    <property type="match status" value="1"/>
</dbReference>
<dbReference type="Pfam" id="PF08459">
    <property type="entry name" value="UvrC_RNaseH_dom"/>
    <property type="match status" value="1"/>
</dbReference>
<dbReference type="SMART" id="SM00465">
    <property type="entry name" value="GIYc"/>
    <property type="match status" value="1"/>
</dbReference>
<dbReference type="SUPFAM" id="SSF46600">
    <property type="entry name" value="C-terminal UvrC-binding domain of UvrB"/>
    <property type="match status" value="1"/>
</dbReference>
<dbReference type="SUPFAM" id="SSF82771">
    <property type="entry name" value="GIY-YIG endonuclease"/>
    <property type="match status" value="1"/>
</dbReference>
<dbReference type="SUPFAM" id="SSF47781">
    <property type="entry name" value="RuvA domain 2-like"/>
    <property type="match status" value="1"/>
</dbReference>
<dbReference type="PROSITE" id="PS50164">
    <property type="entry name" value="GIY_YIG"/>
    <property type="match status" value="1"/>
</dbReference>
<dbReference type="PROSITE" id="PS50151">
    <property type="entry name" value="UVR"/>
    <property type="match status" value="1"/>
</dbReference>
<dbReference type="PROSITE" id="PS50165">
    <property type="entry name" value="UVRC"/>
    <property type="match status" value="1"/>
</dbReference>
<evidence type="ECO:0000255" key="1">
    <source>
        <dbReference type="HAMAP-Rule" id="MF_00203"/>
    </source>
</evidence>
<evidence type="ECO:0007829" key="2">
    <source>
        <dbReference type="PDB" id="1YD0"/>
    </source>
</evidence>
<evidence type="ECO:0007829" key="3">
    <source>
        <dbReference type="PDB" id="2NRR"/>
    </source>
</evidence>
<evidence type="ECO:0007829" key="4">
    <source>
        <dbReference type="PDB" id="2NRT"/>
    </source>
</evidence>
<evidence type="ECO:0007829" key="5">
    <source>
        <dbReference type="PDB" id="2NRW"/>
    </source>
</evidence>
<reference key="1">
    <citation type="journal article" date="1999" name="Nature">
        <title>Evidence for lateral gene transfer between Archaea and Bacteria from genome sequence of Thermotoga maritima.</title>
        <authorList>
            <person name="Nelson K.E."/>
            <person name="Clayton R.A."/>
            <person name="Gill S.R."/>
            <person name="Gwinn M.L."/>
            <person name="Dodson R.J."/>
            <person name="Haft D.H."/>
            <person name="Hickey E.K."/>
            <person name="Peterson J.D."/>
            <person name="Nelson W.C."/>
            <person name="Ketchum K.A."/>
            <person name="McDonald L.A."/>
            <person name="Utterback T.R."/>
            <person name="Malek J.A."/>
            <person name="Linher K.D."/>
            <person name="Garrett M.M."/>
            <person name="Stewart A.M."/>
            <person name="Cotton M.D."/>
            <person name="Pratt M.S."/>
            <person name="Phillips C.A."/>
            <person name="Richardson D.L."/>
            <person name="Heidelberg J.F."/>
            <person name="Sutton G.G."/>
            <person name="Fleischmann R.D."/>
            <person name="Eisen J.A."/>
            <person name="White O."/>
            <person name="Salzberg S.L."/>
            <person name="Smith H.O."/>
            <person name="Venter J.C."/>
            <person name="Fraser C.M."/>
        </authorList>
    </citation>
    <scope>NUCLEOTIDE SEQUENCE [LARGE SCALE GENOMIC DNA]</scope>
    <source>
        <strain>ATCC 43589 / DSM 3109 / JCM 10099 / NBRC 100826 / MSB8</strain>
    </source>
</reference>
<organism>
    <name type="scientific">Thermotoga maritima (strain ATCC 43589 / DSM 3109 / JCM 10099 / NBRC 100826 / MSB8)</name>
    <dbReference type="NCBI Taxonomy" id="243274"/>
    <lineage>
        <taxon>Bacteria</taxon>
        <taxon>Thermotogati</taxon>
        <taxon>Thermotogota</taxon>
        <taxon>Thermotogae</taxon>
        <taxon>Thermotogales</taxon>
        <taxon>Thermotogaceae</taxon>
        <taxon>Thermotoga</taxon>
    </lineage>
</organism>
<proteinExistence type="evidence at protein level"/>
<name>UVRC_THEMA</name>
<feature type="chain" id="PRO_0000138354" description="UvrABC system protein C">
    <location>
        <begin position="1"/>
        <end position="557"/>
    </location>
</feature>
<feature type="domain" description="GIY-YIG" evidence="1">
    <location>
        <begin position="14"/>
        <end position="89"/>
    </location>
</feature>
<feature type="domain" description="UVR" evidence="1">
    <location>
        <begin position="194"/>
        <end position="229"/>
    </location>
</feature>
<feature type="helix" evidence="2">
    <location>
        <begin position="3"/>
        <end position="11"/>
    </location>
</feature>
<feature type="strand" evidence="2">
    <location>
        <begin position="17"/>
        <end position="23"/>
    </location>
</feature>
<feature type="strand" evidence="2">
    <location>
        <begin position="26"/>
        <end position="35"/>
    </location>
</feature>
<feature type="helix" evidence="2">
    <location>
        <begin position="36"/>
        <end position="41"/>
    </location>
</feature>
<feature type="helix" evidence="2">
    <location>
        <begin position="42"/>
        <end position="44"/>
    </location>
</feature>
<feature type="helix" evidence="2">
    <location>
        <begin position="49"/>
        <end position="57"/>
    </location>
</feature>
<feature type="strand" evidence="2">
    <location>
        <begin position="59"/>
        <end position="65"/>
    </location>
</feature>
<feature type="helix" evidence="2">
    <location>
        <begin position="69"/>
        <end position="83"/>
    </location>
</feature>
<feature type="helix" evidence="3">
    <location>
        <begin position="346"/>
        <end position="353"/>
    </location>
</feature>
<feature type="strand" evidence="3">
    <location>
        <begin position="362"/>
        <end position="369"/>
    </location>
</feature>
<feature type="turn" evidence="4">
    <location>
        <begin position="372"/>
        <end position="374"/>
    </location>
</feature>
<feature type="strand" evidence="3">
    <location>
        <begin position="376"/>
        <end position="384"/>
    </location>
</feature>
<feature type="helix" evidence="3">
    <location>
        <begin position="390"/>
        <end position="392"/>
    </location>
</feature>
<feature type="strand" evidence="3">
    <location>
        <begin position="394"/>
        <end position="398"/>
    </location>
</feature>
<feature type="helix" evidence="3">
    <location>
        <begin position="405"/>
        <end position="417"/>
    </location>
</feature>
<feature type="strand" evidence="3">
    <location>
        <begin position="424"/>
        <end position="430"/>
    </location>
</feature>
<feature type="helix" evidence="3">
    <location>
        <begin position="432"/>
        <end position="444"/>
    </location>
</feature>
<feature type="strand" evidence="3">
    <location>
        <begin position="451"/>
        <end position="454"/>
    </location>
</feature>
<feature type="turn" evidence="4">
    <location>
        <begin position="456"/>
        <end position="458"/>
    </location>
</feature>
<feature type="strand" evidence="3">
    <location>
        <begin position="461"/>
        <end position="463"/>
    </location>
</feature>
<feature type="strand" evidence="3">
    <location>
        <begin position="466"/>
        <end position="468"/>
    </location>
</feature>
<feature type="helix" evidence="3">
    <location>
        <begin position="475"/>
        <end position="492"/>
    </location>
</feature>
<feature type="helix" evidence="4">
    <location>
        <begin position="493"/>
        <end position="495"/>
    </location>
</feature>
<feature type="helix" evidence="4">
    <location>
        <begin position="496"/>
        <end position="508"/>
    </location>
</feature>
<feature type="strand" evidence="5">
    <location>
        <begin position="511"/>
        <end position="513"/>
    </location>
</feature>
<feature type="helix" evidence="4">
    <location>
        <begin position="516"/>
        <end position="526"/>
    </location>
</feature>
<feature type="helix" evidence="4">
    <location>
        <begin position="529"/>
        <end position="533"/>
    </location>
</feature>
<feature type="helix" evidence="4">
    <location>
        <begin position="537"/>
        <end position="544"/>
    </location>
</feature>
<feature type="helix" evidence="4">
    <location>
        <begin position="547"/>
        <end position="556"/>
    </location>
</feature>